<protein>
    <recommendedName>
        <fullName>Protein SYS1</fullName>
    </recommendedName>
</protein>
<comment type="function">
    <text>Necessary for the targeting of ARL3 to the Golgi. Involved in protein trafficking. May serve as a receptor for acetylated ARL3.</text>
</comment>
<comment type="subcellular location">
    <subcellularLocation>
        <location>Golgi apparatus membrane</location>
        <topology>Multi-pass membrane protein</topology>
    </subcellularLocation>
</comment>
<comment type="miscellaneous">
    <text evidence="3">Present with 238 molecules/cell in log phase SD medium.</text>
</comment>
<comment type="similarity">
    <text evidence="4">Belongs to the SYS1 family.</text>
</comment>
<name>SYS1_YEAST</name>
<dbReference type="EMBL" id="U22326">
    <property type="protein sequence ID" value="AAA85159.1"/>
    <property type="molecule type" value="Genomic_DNA"/>
</dbReference>
<dbReference type="EMBL" id="Z49279">
    <property type="protein sequence ID" value="CAA89294.1"/>
    <property type="molecule type" value="Genomic_DNA"/>
</dbReference>
<dbReference type="EMBL" id="X87611">
    <property type="protein sequence ID" value="CAA60918.1"/>
    <property type="molecule type" value="Genomic_DNA"/>
</dbReference>
<dbReference type="EMBL" id="AY558345">
    <property type="protein sequence ID" value="AAS56671.1"/>
    <property type="molecule type" value="Genomic_DNA"/>
</dbReference>
<dbReference type="EMBL" id="X03449">
    <property type="protein sequence ID" value="CAA27176.1"/>
    <property type="molecule type" value="Genomic_DNA"/>
</dbReference>
<dbReference type="EMBL" id="BK006943">
    <property type="protein sequence ID" value="DAA08787.1"/>
    <property type="molecule type" value="Genomic_DNA"/>
</dbReference>
<dbReference type="PIR" id="S55184">
    <property type="entry name" value="S55184"/>
</dbReference>
<dbReference type="RefSeq" id="NP_012530.1">
    <property type="nucleotide sequence ID" value="NM_001181438.1"/>
</dbReference>
<dbReference type="BioGRID" id="33753">
    <property type="interactions" value="397"/>
</dbReference>
<dbReference type="DIP" id="DIP-2613N"/>
<dbReference type="FunCoup" id="P41544">
    <property type="interactions" value="279"/>
</dbReference>
<dbReference type="IntAct" id="P41544">
    <property type="interactions" value="39"/>
</dbReference>
<dbReference type="MINT" id="P41544"/>
<dbReference type="STRING" id="4932.YJL004C"/>
<dbReference type="iPTMnet" id="P41544"/>
<dbReference type="PaxDb" id="4932-YJL004C"/>
<dbReference type="PeptideAtlas" id="P41544"/>
<dbReference type="DNASU" id="853453"/>
<dbReference type="EnsemblFungi" id="YJL004C_mRNA">
    <property type="protein sequence ID" value="YJL004C"/>
    <property type="gene ID" value="YJL004C"/>
</dbReference>
<dbReference type="GeneID" id="853453"/>
<dbReference type="KEGG" id="sce:YJL004C"/>
<dbReference type="AGR" id="SGD:S000003541"/>
<dbReference type="SGD" id="S000003541">
    <property type="gene designation" value="SYS1"/>
</dbReference>
<dbReference type="VEuPathDB" id="FungiDB:YJL004C"/>
<dbReference type="eggNOG" id="KOG4697">
    <property type="taxonomic scope" value="Eukaryota"/>
</dbReference>
<dbReference type="GeneTree" id="ENSGT00940000154347"/>
<dbReference type="HOGENOM" id="CLU_081382_1_0_1"/>
<dbReference type="InParanoid" id="P41544"/>
<dbReference type="OMA" id="EYEMVGM"/>
<dbReference type="OrthoDB" id="542931at2759"/>
<dbReference type="BioCyc" id="YEAST:G3O-31483-MONOMER"/>
<dbReference type="Reactome" id="R-SCE-6811440">
    <property type="pathway name" value="Retrograde transport at the Trans-Golgi-Network"/>
</dbReference>
<dbReference type="BioGRID-ORCS" id="853453">
    <property type="hits" value="0 hits in 10 CRISPR screens"/>
</dbReference>
<dbReference type="PRO" id="PR:P41544"/>
<dbReference type="Proteomes" id="UP000002311">
    <property type="component" value="Chromosome X"/>
</dbReference>
<dbReference type="RNAct" id="P41544">
    <property type="molecule type" value="protein"/>
</dbReference>
<dbReference type="GO" id="GO:0005829">
    <property type="term" value="C:cytosol"/>
    <property type="evidence" value="ECO:0007669"/>
    <property type="project" value="GOC"/>
</dbReference>
<dbReference type="GO" id="GO:0000139">
    <property type="term" value="C:Golgi membrane"/>
    <property type="evidence" value="ECO:0000314"/>
    <property type="project" value="SGD"/>
</dbReference>
<dbReference type="GO" id="GO:0005802">
    <property type="term" value="C:trans-Golgi network"/>
    <property type="evidence" value="ECO:0000314"/>
    <property type="project" value="SGD"/>
</dbReference>
<dbReference type="GO" id="GO:0006895">
    <property type="term" value="P:Golgi to endosome transport"/>
    <property type="evidence" value="ECO:0000316"/>
    <property type="project" value="SGD"/>
</dbReference>
<dbReference type="GO" id="GO:0043001">
    <property type="term" value="P:Golgi to plasma membrane protein transport"/>
    <property type="evidence" value="ECO:0000315"/>
    <property type="project" value="SGD"/>
</dbReference>
<dbReference type="GO" id="GO:0034067">
    <property type="term" value="P:protein localization to Golgi apparatus"/>
    <property type="evidence" value="ECO:0000315"/>
    <property type="project" value="SGD"/>
</dbReference>
<dbReference type="InterPro" id="IPR019185">
    <property type="entry name" value="Integral_membrane_SYS1-rel"/>
</dbReference>
<dbReference type="PANTHER" id="PTHR12952:SF0">
    <property type="entry name" value="PROTEIN SYS1 HOMOLOG"/>
    <property type="match status" value="1"/>
</dbReference>
<dbReference type="PANTHER" id="PTHR12952">
    <property type="entry name" value="SYS1"/>
    <property type="match status" value="1"/>
</dbReference>
<dbReference type="Pfam" id="PF09801">
    <property type="entry name" value="SYS1"/>
    <property type="match status" value="1"/>
</dbReference>
<sequence length="203" mass="23716">MVSIRRYLRVPNELKPSQIFKQDSLSPSKIGLQIVLLQIFYYTTAIVLFYCWAKLAGYDLNIKEWLFSWENIDFTNAYGLSISLLWLLDSLICVFFLTVIVGRSKLAWDFAITIHAINFIVVFLYTRKFPSFSWFFLQILSSLILIFLGTWTTRWRELRDTFFEGLVDPNEGEVGLVTPSQQHSNHSELEQSPIQLKDLESQI</sequence>
<evidence type="ECO:0000255" key="1"/>
<evidence type="ECO:0000269" key="2">
    <source>
    </source>
</evidence>
<evidence type="ECO:0000269" key="3">
    <source>
    </source>
</evidence>
<evidence type="ECO:0000305" key="4"/>
<evidence type="ECO:0007744" key="5">
    <source>
    </source>
</evidence>
<organism>
    <name type="scientific">Saccharomyces cerevisiae (strain ATCC 204508 / S288c)</name>
    <name type="common">Baker's yeast</name>
    <dbReference type="NCBI Taxonomy" id="559292"/>
    <lineage>
        <taxon>Eukaryota</taxon>
        <taxon>Fungi</taxon>
        <taxon>Dikarya</taxon>
        <taxon>Ascomycota</taxon>
        <taxon>Saccharomycotina</taxon>
        <taxon>Saccharomycetes</taxon>
        <taxon>Saccharomycetales</taxon>
        <taxon>Saccharomycetaceae</taxon>
        <taxon>Saccharomyces</taxon>
    </lineage>
</organism>
<feature type="chain" id="PRO_0000213942" description="Protein SYS1">
    <location>
        <begin position="1"/>
        <end position="203"/>
    </location>
</feature>
<feature type="topological domain" description="Cytoplasmic" evidence="1">
    <location>
        <begin position="1"/>
        <end position="29"/>
    </location>
</feature>
<feature type="transmembrane region" description="Helical" evidence="1">
    <location>
        <begin position="30"/>
        <end position="52"/>
    </location>
</feature>
<feature type="topological domain" description="Lumenal" evidence="1">
    <location>
        <begin position="53"/>
        <end position="78"/>
    </location>
</feature>
<feature type="transmembrane region" description="Helical" evidence="1">
    <location>
        <begin position="79"/>
        <end position="101"/>
    </location>
</feature>
<feature type="topological domain" description="Cytoplasmic" evidence="1">
    <location>
        <begin position="102"/>
        <end position="105"/>
    </location>
</feature>
<feature type="transmembrane region" description="Helical" evidence="1">
    <location>
        <begin position="106"/>
        <end position="125"/>
    </location>
</feature>
<feature type="topological domain" description="Lumenal" evidence="1">
    <location>
        <begin position="126"/>
        <end position="131"/>
    </location>
</feature>
<feature type="transmembrane region" description="Helical" evidence="1">
    <location>
        <begin position="132"/>
        <end position="154"/>
    </location>
</feature>
<feature type="topological domain" description="Cytoplasmic" evidence="1">
    <location>
        <begin position="155"/>
        <end position="203"/>
    </location>
</feature>
<feature type="modified residue" description="Phosphoserine" evidence="5">
    <location>
        <position position="192"/>
    </location>
</feature>
<feature type="cross-link" description="Glycyl lysine isopeptide (Lys-Gly) (interchain with G-Cter in ubiquitin)" evidence="2">
    <location>
        <position position="15"/>
    </location>
</feature>
<feature type="sequence conflict" description="In Ref. 1; AAA85159." evidence="4" ref="1">
    <original>GTWTTRWRELRDTFFEGLVDPNEGEVGLVTPSQQHSNHSELEQSPIQLKDLESQI</original>
    <variation>ALT</variation>
    <location>
        <begin position="149"/>
        <end position="203"/>
    </location>
</feature>
<gene>
    <name type="primary">SYS1</name>
    <name type="ordered locus">YJL004C</name>
    <name type="ORF">J1402</name>
    <name type="ORF">YJR83.17</name>
</gene>
<proteinExistence type="evidence at protein level"/>
<keyword id="KW-0333">Golgi apparatus</keyword>
<keyword id="KW-1017">Isopeptide bond</keyword>
<keyword id="KW-0472">Membrane</keyword>
<keyword id="KW-0597">Phosphoprotein</keyword>
<keyword id="KW-0653">Protein transport</keyword>
<keyword id="KW-1185">Reference proteome</keyword>
<keyword id="KW-0812">Transmembrane</keyword>
<keyword id="KW-1133">Transmembrane helix</keyword>
<keyword id="KW-0813">Transport</keyword>
<keyword id="KW-0832">Ubl conjugation</keyword>
<reference key="1">
    <citation type="journal article" date="1995" name="FEBS Lett.">
        <title>The essential yeast NLT1 gene encodes the 64 kDa glycoprotein subunit of the oligosaccharyl transferase.</title>
        <authorList>
            <person name="Pathak R."/>
            <person name="Parker C.S."/>
            <person name="Imperiali B."/>
        </authorList>
    </citation>
    <scope>NUCLEOTIDE SEQUENCE [GENOMIC DNA]</scope>
</reference>
<reference key="2">
    <citation type="journal article" date="1996" name="EMBO J.">
        <title>Complete nucleotide sequence of Saccharomyces cerevisiae chromosome X.</title>
        <authorList>
            <person name="Galibert F."/>
            <person name="Alexandraki D."/>
            <person name="Baur A."/>
            <person name="Boles E."/>
            <person name="Chalwatzis N."/>
            <person name="Chuat J.-C."/>
            <person name="Coster F."/>
            <person name="Cziepluch C."/>
            <person name="de Haan M."/>
            <person name="Domdey H."/>
            <person name="Durand P."/>
            <person name="Entian K.-D."/>
            <person name="Gatius M."/>
            <person name="Goffeau A."/>
            <person name="Grivell L.A."/>
            <person name="Hennemann A."/>
            <person name="Herbert C.J."/>
            <person name="Heumann K."/>
            <person name="Hilger F."/>
            <person name="Hollenberg C.P."/>
            <person name="Huang M.-E."/>
            <person name="Jacq C."/>
            <person name="Jauniaux J.-C."/>
            <person name="Katsoulou C."/>
            <person name="Kirchrath L."/>
            <person name="Kleine K."/>
            <person name="Kordes E."/>
            <person name="Koetter P."/>
            <person name="Liebl S."/>
            <person name="Louis E.J."/>
            <person name="Manus V."/>
            <person name="Mewes H.-W."/>
            <person name="Miosga T."/>
            <person name="Obermaier B."/>
            <person name="Perea J."/>
            <person name="Pohl T.M."/>
            <person name="Portetelle D."/>
            <person name="Pujol A."/>
            <person name="Purnelle B."/>
            <person name="Ramezani Rad M."/>
            <person name="Rasmussen S.W."/>
            <person name="Rose M."/>
            <person name="Rossau R."/>
            <person name="Schaaff-Gerstenschlaeger I."/>
            <person name="Smits P.H.M."/>
            <person name="Scarcez T."/>
            <person name="Soriano N."/>
            <person name="To Van D."/>
            <person name="Tzermia M."/>
            <person name="Van Broekhoven A."/>
            <person name="Vandenbol M."/>
            <person name="Wedler H."/>
            <person name="von Wettstein D."/>
            <person name="Wambutt R."/>
            <person name="Zagulski M."/>
            <person name="Zollner A."/>
            <person name="Karpfinger-Hartl L."/>
        </authorList>
    </citation>
    <scope>NUCLEOTIDE SEQUENCE [LARGE SCALE GENOMIC DNA]</scope>
    <source>
        <strain>ATCC 204508 / S288c</strain>
    </source>
</reference>
<reference key="3">
    <citation type="journal article" date="2014" name="G3 (Bethesda)">
        <title>The reference genome sequence of Saccharomyces cerevisiae: Then and now.</title>
        <authorList>
            <person name="Engel S.R."/>
            <person name="Dietrich F.S."/>
            <person name="Fisk D.G."/>
            <person name="Binkley G."/>
            <person name="Balakrishnan R."/>
            <person name="Costanzo M.C."/>
            <person name="Dwight S.S."/>
            <person name="Hitz B.C."/>
            <person name="Karra K."/>
            <person name="Nash R.S."/>
            <person name="Weng S."/>
            <person name="Wong E.D."/>
            <person name="Lloyd P."/>
            <person name="Skrzypek M.S."/>
            <person name="Miyasato S.R."/>
            <person name="Simison M."/>
            <person name="Cherry J.M."/>
        </authorList>
    </citation>
    <scope>GENOME REANNOTATION</scope>
    <source>
        <strain>ATCC 204508 / S288c</strain>
    </source>
</reference>
<reference key="4">
    <citation type="journal article" date="2007" name="Genome Res.">
        <title>Approaching a complete repository of sequence-verified protein-encoding clones for Saccharomyces cerevisiae.</title>
        <authorList>
            <person name="Hu Y."/>
            <person name="Rolfs A."/>
            <person name="Bhullar B."/>
            <person name="Murthy T.V.S."/>
            <person name="Zhu C."/>
            <person name="Berger M.F."/>
            <person name="Camargo A.A."/>
            <person name="Kelley F."/>
            <person name="McCarron S."/>
            <person name="Jepson D."/>
            <person name="Richardson A."/>
            <person name="Raphael J."/>
            <person name="Moreira D."/>
            <person name="Taycher E."/>
            <person name="Zuo D."/>
            <person name="Mohr S."/>
            <person name="Kane M.F."/>
            <person name="Williamson J."/>
            <person name="Simpson A.J.G."/>
            <person name="Bulyk M.L."/>
            <person name="Harlow E."/>
            <person name="Marsischky G."/>
            <person name="Kolodner R.D."/>
            <person name="LaBaer J."/>
        </authorList>
    </citation>
    <scope>NUCLEOTIDE SEQUENCE [GENOMIC DNA]</scope>
    <source>
        <strain>ATCC 204508 / S288c</strain>
    </source>
</reference>
<reference key="5">
    <citation type="journal article" date="1986" name="Curr. Genet.">
        <title>Yeast adenylate cyclase catalytic domain is carboxy terminal.</title>
        <authorList>
            <person name="Masson P."/>
            <person name="Lenzen G."/>
            <person name="Jacquemin J.M."/>
            <person name="Danchin A."/>
        </authorList>
    </citation>
    <scope>NUCLEOTIDE SEQUENCE [GENOMIC DNA] OF 6-203</scope>
</reference>
<reference key="6">
    <citation type="journal article" date="2003" name="Nature">
        <title>Global analysis of protein expression in yeast.</title>
        <authorList>
            <person name="Ghaemmaghami S."/>
            <person name="Huh W.-K."/>
            <person name="Bower K."/>
            <person name="Howson R.W."/>
            <person name="Belle A."/>
            <person name="Dephoure N."/>
            <person name="O'Shea E.K."/>
            <person name="Weissman J.S."/>
        </authorList>
    </citation>
    <scope>LEVEL OF PROTEIN EXPRESSION [LARGE SCALE ANALYSIS]</scope>
</reference>
<reference key="7">
    <citation type="journal article" date="2003" name="Proc. Natl. Acad. Sci. U.S.A.">
        <title>A subset of membrane-associated proteins is ubiquitinated in response to mutations in the endoplasmic reticulum degradation machinery.</title>
        <authorList>
            <person name="Hitchcock A.L."/>
            <person name="Auld K."/>
            <person name="Gygi S.P."/>
            <person name="Silver P.A."/>
        </authorList>
    </citation>
    <scope>UBIQUITINATION [LARGE SCALE ANALYSIS] AT LYS-15</scope>
    <scope>IDENTIFICATION BY MASS SPECTROMETRY</scope>
</reference>
<reference key="8">
    <citation type="journal article" date="2004" name="Nat. Cell Biol.">
        <title>Targeting of the Arf-like GTPase Arl3p to the Golgi requires N-terminal acetylation and the membrane protein Sys1p.</title>
        <authorList>
            <person name="Behnia R."/>
            <person name="Panic B."/>
            <person name="Whyte J.R.C."/>
            <person name="Munro S."/>
        </authorList>
    </citation>
    <scope>INTERACTION WITH ARL3</scope>
</reference>
<reference key="9">
    <citation type="journal article" date="2004" name="Nat. Cell Biol.">
        <title>Golgi targeting of ARF-like GTPase Arl3p requires its Nalpha-acetylation and the integral membrane protein Sys1p.</title>
        <authorList>
            <person name="Setty S.R."/>
            <person name="Strochlic T.I."/>
            <person name="Tong A.H."/>
            <person name="Boone C."/>
            <person name="Burd C.G."/>
        </authorList>
    </citation>
    <scope>INTERACTION WITH ARL3</scope>
</reference>
<reference key="10">
    <citation type="journal article" date="2006" name="Proc. Natl. Acad. Sci. U.S.A.">
        <title>A global topology map of the Saccharomyces cerevisiae membrane proteome.</title>
        <authorList>
            <person name="Kim H."/>
            <person name="Melen K."/>
            <person name="Oesterberg M."/>
            <person name="von Heijne G."/>
        </authorList>
    </citation>
    <scope>TOPOLOGY [LARGE SCALE ANALYSIS]</scope>
    <source>
        <strain>ATCC 208353 / W303-1A</strain>
    </source>
</reference>
<reference key="11">
    <citation type="journal article" date="2008" name="Mol. Cell. Proteomics">
        <title>A multidimensional chromatography technology for in-depth phosphoproteome analysis.</title>
        <authorList>
            <person name="Albuquerque C.P."/>
            <person name="Smolka M.B."/>
            <person name="Payne S.H."/>
            <person name="Bafna V."/>
            <person name="Eng J."/>
            <person name="Zhou H."/>
        </authorList>
    </citation>
    <scope>PHOSPHORYLATION [LARGE SCALE ANALYSIS] AT SER-192</scope>
    <scope>IDENTIFICATION BY MASS SPECTROMETRY [LARGE SCALE ANALYSIS]</scope>
</reference>
<accession>P41544</accession>
<accession>D6VWH1</accession>